<accession>A5IYX8</accession>
<sequence>MLYKDIKVSHLMNSNDELQKLVKDFEAELWTLNFKKSVGSLDQSHKIRAIRRDIARIKTELNAREKGAK</sequence>
<gene>
    <name evidence="1" type="primary">rpmC</name>
    <name type="ordered locus">MAG7510</name>
</gene>
<keyword id="KW-1185">Reference proteome</keyword>
<keyword id="KW-0687">Ribonucleoprotein</keyword>
<keyword id="KW-0689">Ribosomal protein</keyword>
<proteinExistence type="inferred from homology"/>
<dbReference type="EMBL" id="CU179680">
    <property type="protein sequence ID" value="CAL59237.1"/>
    <property type="molecule type" value="Genomic_DNA"/>
</dbReference>
<dbReference type="RefSeq" id="WP_011949699.1">
    <property type="nucleotide sequence ID" value="NC_009497.1"/>
</dbReference>
<dbReference type="SMR" id="A5IYX8"/>
<dbReference type="STRING" id="347257.MAG7510"/>
<dbReference type="GeneID" id="93358282"/>
<dbReference type="KEGG" id="maa:MAG7510"/>
<dbReference type="HOGENOM" id="CLU_158491_7_0_14"/>
<dbReference type="Proteomes" id="UP000007065">
    <property type="component" value="Chromosome"/>
</dbReference>
<dbReference type="GO" id="GO:1990904">
    <property type="term" value="C:ribonucleoprotein complex"/>
    <property type="evidence" value="ECO:0007669"/>
    <property type="project" value="UniProtKB-KW"/>
</dbReference>
<dbReference type="GO" id="GO:0005840">
    <property type="term" value="C:ribosome"/>
    <property type="evidence" value="ECO:0007669"/>
    <property type="project" value="UniProtKB-KW"/>
</dbReference>
<dbReference type="GO" id="GO:0003735">
    <property type="term" value="F:structural constituent of ribosome"/>
    <property type="evidence" value="ECO:0007669"/>
    <property type="project" value="InterPro"/>
</dbReference>
<dbReference type="GO" id="GO:0006412">
    <property type="term" value="P:translation"/>
    <property type="evidence" value="ECO:0007669"/>
    <property type="project" value="UniProtKB-UniRule"/>
</dbReference>
<dbReference type="CDD" id="cd00427">
    <property type="entry name" value="Ribosomal_L29_HIP"/>
    <property type="match status" value="1"/>
</dbReference>
<dbReference type="Gene3D" id="1.10.287.310">
    <property type="match status" value="1"/>
</dbReference>
<dbReference type="HAMAP" id="MF_00374">
    <property type="entry name" value="Ribosomal_uL29"/>
    <property type="match status" value="1"/>
</dbReference>
<dbReference type="InterPro" id="IPR001854">
    <property type="entry name" value="Ribosomal_uL29"/>
</dbReference>
<dbReference type="InterPro" id="IPR018254">
    <property type="entry name" value="Ribosomal_uL29_CS"/>
</dbReference>
<dbReference type="InterPro" id="IPR036049">
    <property type="entry name" value="Ribosomal_uL29_sf"/>
</dbReference>
<dbReference type="NCBIfam" id="TIGR00012">
    <property type="entry name" value="L29"/>
    <property type="match status" value="1"/>
</dbReference>
<dbReference type="Pfam" id="PF00831">
    <property type="entry name" value="Ribosomal_L29"/>
    <property type="match status" value="1"/>
</dbReference>
<dbReference type="SUPFAM" id="SSF46561">
    <property type="entry name" value="Ribosomal protein L29 (L29p)"/>
    <property type="match status" value="1"/>
</dbReference>
<dbReference type="PROSITE" id="PS00579">
    <property type="entry name" value="RIBOSOMAL_L29"/>
    <property type="match status" value="1"/>
</dbReference>
<organism>
    <name type="scientific">Mycoplasmopsis agalactiae (strain NCTC 10123 / CIP 59.7 / PG2)</name>
    <name type="common">Mycoplasma agalactiae</name>
    <dbReference type="NCBI Taxonomy" id="347257"/>
    <lineage>
        <taxon>Bacteria</taxon>
        <taxon>Bacillati</taxon>
        <taxon>Mycoplasmatota</taxon>
        <taxon>Mycoplasmoidales</taxon>
        <taxon>Metamycoplasmataceae</taxon>
        <taxon>Mycoplasmopsis</taxon>
    </lineage>
</organism>
<protein>
    <recommendedName>
        <fullName evidence="1">Large ribosomal subunit protein uL29</fullName>
    </recommendedName>
    <alternativeName>
        <fullName evidence="2">50S ribosomal protein L29</fullName>
    </alternativeName>
</protein>
<name>RL29_MYCAP</name>
<comment type="similarity">
    <text evidence="1">Belongs to the universal ribosomal protein uL29 family.</text>
</comment>
<evidence type="ECO:0000255" key="1">
    <source>
        <dbReference type="HAMAP-Rule" id="MF_00374"/>
    </source>
</evidence>
<evidence type="ECO:0000305" key="2"/>
<reference key="1">
    <citation type="journal article" date="2007" name="PLoS Genet.">
        <title>Being pathogenic, plastic, and sexual while living with a nearly minimal bacterial genome.</title>
        <authorList>
            <person name="Sirand-Pugnet P."/>
            <person name="Lartigue C."/>
            <person name="Marenda M."/>
            <person name="Jacob D."/>
            <person name="Barre A."/>
            <person name="Barbe V."/>
            <person name="Schenowitz C."/>
            <person name="Mangenot S."/>
            <person name="Couloux A."/>
            <person name="Segurens B."/>
            <person name="de Daruvar A."/>
            <person name="Blanchard A."/>
            <person name="Citti C."/>
        </authorList>
    </citation>
    <scope>NUCLEOTIDE SEQUENCE [LARGE SCALE GENOMIC DNA]</scope>
    <source>
        <strain>NCTC 10123 / CIP 59.7 / PG2</strain>
    </source>
</reference>
<feature type="chain" id="PRO_1000121789" description="Large ribosomal subunit protein uL29">
    <location>
        <begin position="1"/>
        <end position="69"/>
    </location>
</feature>